<keyword id="KW-0325">Glycoprotein</keyword>
<keyword id="KW-0349">Heme</keyword>
<keyword id="KW-0408">Iron</keyword>
<keyword id="KW-0472">Membrane</keyword>
<keyword id="KW-0479">Metal-binding</keyword>
<keyword id="KW-0503">Monooxygenase</keyword>
<keyword id="KW-0560">Oxidoreductase</keyword>
<keyword id="KW-1185">Reference proteome</keyword>
<keyword id="KW-0812">Transmembrane</keyword>
<keyword id="KW-1133">Transmembrane helix</keyword>
<protein>
    <recommendedName>
        <fullName evidence="5">Cytochrome P450 monooxygenase hepD</fullName>
        <ecNumber evidence="7">1.-.-.-</ecNumber>
    </recommendedName>
    <alternativeName>
        <fullName evidence="5">Heptelidic acid biosynthesis cluster protein D</fullName>
    </alternativeName>
</protein>
<sequence length="500" mass="56950">MNSISALFSAGGFQWILLSLSLAFIVVYSLFYLAVGLYNLYFHPLARYPGPLLGRASSLWYARSLARGTVAQDTLKLHEKYGDVVRIAPDELSFIQPENWSAIYGHQLGKDYRELIKDPRYHDTVKPTPTILTGDWDEHTFYRKILSNSFSEKSLKDQEHILHHFVDLFVQRLKETSAEGTRELNMTDQWNYLTFDVIGFLTYGEEFHCLTSSKLHDWIEAMLCVAILMSLGQAARHLPFPFDKIYKQWAIPSNVKRQVALHRDLTEVAIPHIPIQYASAYRLNSRKGDIPYSVLKEHANILTIGGSETTATLLAGATFHLGKNPPVLQKLATEIRTTFVNDGEITVARLSECKYLLATVEECLRIYPPSPANHTRMVPKEGIVLNDQHIPGGIGVGMPMYAAFRASSNFTYPDRFAPERWLGDPMYSKDKKGALQPFSFGPRNCLGRHLAYQEIKLALAKLVYHFDLELNPKCGDWDEQKNFTFWVKPPLWVNLHPVKS</sequence>
<gene>
    <name evidence="5" type="primary">hepD</name>
    <name type="ORF">AO090011000411</name>
</gene>
<proteinExistence type="inferred from homology"/>
<name>HEPD_ASPOR</name>
<organism>
    <name type="scientific">Aspergillus oryzae (strain ATCC 42149 / RIB 40)</name>
    <name type="common">Yellow koji mold</name>
    <dbReference type="NCBI Taxonomy" id="510516"/>
    <lineage>
        <taxon>Eukaryota</taxon>
        <taxon>Fungi</taxon>
        <taxon>Dikarya</taxon>
        <taxon>Ascomycota</taxon>
        <taxon>Pezizomycotina</taxon>
        <taxon>Eurotiomycetes</taxon>
        <taxon>Eurotiomycetidae</taxon>
        <taxon>Eurotiales</taxon>
        <taxon>Aspergillaceae</taxon>
        <taxon>Aspergillus</taxon>
        <taxon>Aspergillus subgen. Circumdati</taxon>
    </lineage>
</organism>
<feature type="chain" id="PRO_0000450830" description="Cytochrome P450 monooxygenase hepD">
    <location>
        <begin position="1"/>
        <end position="500"/>
    </location>
</feature>
<feature type="transmembrane region" description="Helical" evidence="2">
    <location>
        <begin position="15"/>
        <end position="35"/>
    </location>
</feature>
<feature type="binding site" description="axial binding residue" evidence="1">
    <location>
        <position position="445"/>
    </location>
    <ligand>
        <name>heme</name>
        <dbReference type="ChEBI" id="CHEBI:30413"/>
    </ligand>
    <ligandPart>
        <name>Fe</name>
        <dbReference type="ChEBI" id="CHEBI:18248"/>
    </ligandPart>
</feature>
<feature type="glycosylation site" description="N-linked (GlcNAc...) asparagine" evidence="3">
    <location>
        <position position="99"/>
    </location>
</feature>
<feature type="glycosylation site" description="N-linked (GlcNAc...) asparagine" evidence="3">
    <location>
        <position position="185"/>
    </location>
</feature>
<feature type="glycosylation site" description="N-linked (GlcNAc...) asparagine" evidence="3">
    <location>
        <position position="373"/>
    </location>
</feature>
<feature type="glycosylation site" description="N-linked (GlcNAc...) asparagine" evidence="3">
    <location>
        <position position="409"/>
    </location>
</feature>
<feature type="glycosylation site" description="N-linked (GlcNAc...) asparagine" evidence="3">
    <location>
        <position position="482"/>
    </location>
</feature>
<comment type="function">
    <text evidence="4">Cytochrome P450 monooxygenase; part of the gene cluster that mediates the biosynthesis of heptelidic acid (HA), a sesquiterpene lactone that acts as an inhibitor of glyceraldehyde-3-phosphatedehydrogenase (GAPDH) and a growth inhibitor of the salt-tolerant lactic acid bacteria in soy sauce brewing.</text>
</comment>
<comment type="cofactor">
    <cofactor evidence="1">
        <name>heme</name>
        <dbReference type="ChEBI" id="CHEBI:30413"/>
    </cofactor>
</comment>
<comment type="pathway">
    <text evidence="7">Secondary metabolite biosynthesis.</text>
</comment>
<comment type="subcellular location">
    <subcellularLocation>
        <location evidence="2">Membrane</location>
        <topology evidence="2">Single-pass membrane protein</topology>
    </subcellularLocation>
</comment>
<comment type="disruption phenotype">
    <text evidence="4">Abolishes the production of heptelidic acid.</text>
</comment>
<comment type="similarity">
    <text evidence="6">Belongs to the cytochrome P450 family.</text>
</comment>
<reference key="1">
    <citation type="journal article" date="2005" name="Nature">
        <title>Genome sequencing and analysis of Aspergillus oryzae.</title>
        <authorList>
            <person name="Machida M."/>
            <person name="Asai K."/>
            <person name="Sano M."/>
            <person name="Tanaka T."/>
            <person name="Kumagai T."/>
            <person name="Terai G."/>
            <person name="Kusumoto K."/>
            <person name="Arima T."/>
            <person name="Akita O."/>
            <person name="Kashiwagi Y."/>
            <person name="Abe K."/>
            <person name="Gomi K."/>
            <person name="Horiuchi H."/>
            <person name="Kitamoto K."/>
            <person name="Kobayashi T."/>
            <person name="Takeuchi M."/>
            <person name="Denning D.W."/>
            <person name="Galagan J.E."/>
            <person name="Nierman W.C."/>
            <person name="Yu J."/>
            <person name="Archer D.B."/>
            <person name="Bennett J.W."/>
            <person name="Bhatnagar D."/>
            <person name="Cleveland T.E."/>
            <person name="Fedorova N.D."/>
            <person name="Gotoh O."/>
            <person name="Horikawa H."/>
            <person name="Hosoyama A."/>
            <person name="Ichinomiya M."/>
            <person name="Igarashi R."/>
            <person name="Iwashita K."/>
            <person name="Juvvadi P.R."/>
            <person name="Kato M."/>
            <person name="Kato Y."/>
            <person name="Kin T."/>
            <person name="Kokubun A."/>
            <person name="Maeda H."/>
            <person name="Maeyama N."/>
            <person name="Maruyama J."/>
            <person name="Nagasaki H."/>
            <person name="Nakajima T."/>
            <person name="Oda K."/>
            <person name="Okada K."/>
            <person name="Paulsen I."/>
            <person name="Sakamoto K."/>
            <person name="Sawano T."/>
            <person name="Takahashi M."/>
            <person name="Takase K."/>
            <person name="Terabayashi Y."/>
            <person name="Wortman J.R."/>
            <person name="Yamada O."/>
            <person name="Yamagata Y."/>
            <person name="Anazawa H."/>
            <person name="Hata Y."/>
            <person name="Koide Y."/>
            <person name="Komori T."/>
            <person name="Koyama Y."/>
            <person name="Minetoki T."/>
            <person name="Suharnan S."/>
            <person name="Tanaka A."/>
            <person name="Isono K."/>
            <person name="Kuhara S."/>
            <person name="Ogasawara N."/>
            <person name="Kikuchi H."/>
        </authorList>
    </citation>
    <scope>NUCLEOTIDE SEQUENCE [LARGE SCALE GENOMIC DNA]</scope>
    <source>
        <strain>ATCC 42149 / RIB 40</strain>
    </source>
</reference>
<reference key="2">
    <citation type="journal article" date="2019" name="Biosci. Biotechnol. Biochem.">
        <title>Identification of a gene cluster for biosynthesis of the sesquiterpene antibiotic, heptelidic acid, in Aspergillus oryzae.</title>
        <authorList>
            <person name="Shinohara Y."/>
            <person name="Nishimura I."/>
            <person name="Koyama Y."/>
        </authorList>
    </citation>
    <scope>FUNCTION</scope>
    <scope>DISRUPTION PHENOTYPE</scope>
    <scope>PATHWAY</scope>
</reference>
<dbReference type="EC" id="1.-.-.-" evidence="7"/>
<dbReference type="EMBL" id="BA000055">
    <property type="protein sequence ID" value="BAE64915.1"/>
    <property type="molecule type" value="Genomic_DNA"/>
</dbReference>
<dbReference type="SMR" id="Q2U0K0"/>
<dbReference type="GlyCosmos" id="Q2U0K0">
    <property type="glycosylation" value="5 sites, No reported glycans"/>
</dbReference>
<dbReference type="EnsemblFungi" id="BAE64915">
    <property type="protein sequence ID" value="BAE64915"/>
    <property type="gene ID" value="AO090011000411"/>
</dbReference>
<dbReference type="HOGENOM" id="CLU_001570_14_11_1"/>
<dbReference type="OMA" id="MEQSTHI"/>
<dbReference type="Proteomes" id="UP000006564">
    <property type="component" value="Chromosome 7"/>
</dbReference>
<dbReference type="GO" id="GO:0016020">
    <property type="term" value="C:membrane"/>
    <property type="evidence" value="ECO:0007669"/>
    <property type="project" value="UniProtKB-SubCell"/>
</dbReference>
<dbReference type="GO" id="GO:0020037">
    <property type="term" value="F:heme binding"/>
    <property type="evidence" value="ECO:0007669"/>
    <property type="project" value="InterPro"/>
</dbReference>
<dbReference type="GO" id="GO:0005506">
    <property type="term" value="F:iron ion binding"/>
    <property type="evidence" value="ECO:0007669"/>
    <property type="project" value="InterPro"/>
</dbReference>
<dbReference type="GO" id="GO:0004497">
    <property type="term" value="F:monooxygenase activity"/>
    <property type="evidence" value="ECO:0007669"/>
    <property type="project" value="UniProtKB-KW"/>
</dbReference>
<dbReference type="GO" id="GO:0016705">
    <property type="term" value="F:oxidoreductase activity, acting on paired donors, with incorporation or reduction of molecular oxygen"/>
    <property type="evidence" value="ECO:0007669"/>
    <property type="project" value="InterPro"/>
</dbReference>
<dbReference type="GO" id="GO:0009058">
    <property type="term" value="P:biosynthetic process"/>
    <property type="evidence" value="ECO:0007669"/>
    <property type="project" value="UniProtKB-ARBA"/>
</dbReference>
<dbReference type="CDD" id="cd11058">
    <property type="entry name" value="CYP60B-like"/>
    <property type="match status" value="1"/>
</dbReference>
<dbReference type="Gene3D" id="1.10.630.10">
    <property type="entry name" value="Cytochrome P450"/>
    <property type="match status" value="1"/>
</dbReference>
<dbReference type="InterPro" id="IPR001128">
    <property type="entry name" value="Cyt_P450"/>
</dbReference>
<dbReference type="InterPro" id="IPR017972">
    <property type="entry name" value="Cyt_P450_CS"/>
</dbReference>
<dbReference type="InterPro" id="IPR002401">
    <property type="entry name" value="Cyt_P450_E_grp-I"/>
</dbReference>
<dbReference type="InterPro" id="IPR036396">
    <property type="entry name" value="Cyt_P450_sf"/>
</dbReference>
<dbReference type="InterPro" id="IPR050121">
    <property type="entry name" value="Cytochrome_P450_monoxygenase"/>
</dbReference>
<dbReference type="PANTHER" id="PTHR24305">
    <property type="entry name" value="CYTOCHROME P450"/>
    <property type="match status" value="1"/>
</dbReference>
<dbReference type="PANTHER" id="PTHR24305:SF210">
    <property type="entry name" value="CYTOCHROME P450 MONOOXYGENASE ASQL-RELATED"/>
    <property type="match status" value="1"/>
</dbReference>
<dbReference type="Pfam" id="PF00067">
    <property type="entry name" value="p450"/>
    <property type="match status" value="1"/>
</dbReference>
<dbReference type="PRINTS" id="PR00463">
    <property type="entry name" value="EP450I"/>
</dbReference>
<dbReference type="PRINTS" id="PR00385">
    <property type="entry name" value="P450"/>
</dbReference>
<dbReference type="SUPFAM" id="SSF48264">
    <property type="entry name" value="Cytochrome P450"/>
    <property type="match status" value="1"/>
</dbReference>
<dbReference type="PROSITE" id="PS00086">
    <property type="entry name" value="CYTOCHROME_P450"/>
    <property type="match status" value="1"/>
</dbReference>
<evidence type="ECO:0000250" key="1">
    <source>
        <dbReference type="UniProtKB" id="P04798"/>
    </source>
</evidence>
<evidence type="ECO:0000255" key="2"/>
<evidence type="ECO:0000255" key="3">
    <source>
        <dbReference type="PROSITE-ProRule" id="PRU00498"/>
    </source>
</evidence>
<evidence type="ECO:0000269" key="4">
    <source>
    </source>
</evidence>
<evidence type="ECO:0000303" key="5">
    <source>
    </source>
</evidence>
<evidence type="ECO:0000305" key="6"/>
<evidence type="ECO:0000305" key="7">
    <source>
    </source>
</evidence>
<accession>Q2U0K0</accession>